<gene>
    <name type="primary">COX16</name>
    <name type="ordered locus">YALI0C09801g</name>
</gene>
<protein>
    <recommendedName>
        <fullName>Cytochrome c oxidase assembly protein COX16, mitochondrial</fullName>
    </recommendedName>
</protein>
<organism>
    <name type="scientific">Yarrowia lipolytica (strain CLIB 122 / E 150)</name>
    <name type="common">Yeast</name>
    <name type="synonym">Candida lipolytica</name>
    <dbReference type="NCBI Taxonomy" id="284591"/>
    <lineage>
        <taxon>Eukaryota</taxon>
        <taxon>Fungi</taxon>
        <taxon>Dikarya</taxon>
        <taxon>Ascomycota</taxon>
        <taxon>Saccharomycotina</taxon>
        <taxon>Dipodascomycetes</taxon>
        <taxon>Dipodascales</taxon>
        <taxon>Dipodascales incertae sedis</taxon>
        <taxon>Yarrowia</taxon>
    </lineage>
</organism>
<proteinExistence type="inferred from homology"/>
<reference key="1">
    <citation type="journal article" date="2004" name="Nature">
        <title>Genome evolution in yeasts.</title>
        <authorList>
            <person name="Dujon B."/>
            <person name="Sherman D."/>
            <person name="Fischer G."/>
            <person name="Durrens P."/>
            <person name="Casaregola S."/>
            <person name="Lafontaine I."/>
            <person name="de Montigny J."/>
            <person name="Marck C."/>
            <person name="Neuveglise C."/>
            <person name="Talla E."/>
            <person name="Goffard N."/>
            <person name="Frangeul L."/>
            <person name="Aigle M."/>
            <person name="Anthouard V."/>
            <person name="Babour A."/>
            <person name="Barbe V."/>
            <person name="Barnay S."/>
            <person name="Blanchin S."/>
            <person name="Beckerich J.-M."/>
            <person name="Beyne E."/>
            <person name="Bleykasten C."/>
            <person name="Boisrame A."/>
            <person name="Boyer J."/>
            <person name="Cattolico L."/>
            <person name="Confanioleri F."/>
            <person name="de Daruvar A."/>
            <person name="Despons L."/>
            <person name="Fabre E."/>
            <person name="Fairhead C."/>
            <person name="Ferry-Dumazet H."/>
            <person name="Groppi A."/>
            <person name="Hantraye F."/>
            <person name="Hennequin C."/>
            <person name="Jauniaux N."/>
            <person name="Joyet P."/>
            <person name="Kachouri R."/>
            <person name="Kerrest A."/>
            <person name="Koszul R."/>
            <person name="Lemaire M."/>
            <person name="Lesur I."/>
            <person name="Ma L."/>
            <person name="Muller H."/>
            <person name="Nicaud J.-M."/>
            <person name="Nikolski M."/>
            <person name="Oztas S."/>
            <person name="Ozier-Kalogeropoulos O."/>
            <person name="Pellenz S."/>
            <person name="Potier S."/>
            <person name="Richard G.-F."/>
            <person name="Straub M.-L."/>
            <person name="Suleau A."/>
            <person name="Swennen D."/>
            <person name="Tekaia F."/>
            <person name="Wesolowski-Louvel M."/>
            <person name="Westhof E."/>
            <person name="Wirth B."/>
            <person name="Zeniou-Meyer M."/>
            <person name="Zivanovic Y."/>
            <person name="Bolotin-Fukuhara M."/>
            <person name="Thierry A."/>
            <person name="Bouchier C."/>
            <person name="Caudron B."/>
            <person name="Scarpelli C."/>
            <person name="Gaillardin C."/>
            <person name="Weissenbach J."/>
            <person name="Wincker P."/>
            <person name="Souciet J.-L."/>
        </authorList>
    </citation>
    <scope>NUCLEOTIDE SEQUENCE [LARGE SCALE GENOMIC DNA]</scope>
    <source>
        <strain>CLIB 122 / E 150</strain>
    </source>
</reference>
<feature type="transit peptide" description="Mitochondrion" evidence="2">
    <location>
        <begin position="1"/>
        <end status="unknown"/>
    </location>
</feature>
<feature type="chain" id="PRO_0000280654" description="Cytochrome c oxidase assembly protein COX16, mitochondrial">
    <location>
        <begin status="unknown"/>
        <end position="118"/>
    </location>
</feature>
<feature type="transmembrane region" description="Helical" evidence="2">
    <location>
        <begin position="32"/>
        <end position="52"/>
    </location>
</feature>
<accession>Q6CCF6</accession>
<evidence type="ECO:0000250" key="1">
    <source>
        <dbReference type="UniProtKB" id="P47081"/>
    </source>
</evidence>
<evidence type="ECO:0000255" key="2"/>
<evidence type="ECO:0000305" key="3"/>
<sequence length="118" mass="14109">MLEQNKFKTKKQQQAWNKTLAGRYYNAMVKRPFLFFGLPFLTTIYAASVYFAEFTAYRYEIQDGKVKALSEEEALKLDKGRRKVDMKEEFYRLQQLGKQDDWEQVRVPRMKGESDNVF</sequence>
<comment type="function">
    <text evidence="1">Required for the assembly of the mitochondrial respiratory chain complex IV (CIV), also known as cytochrome c oxidase. May participate in merging the COX1 and COX2 assembly lines.</text>
</comment>
<comment type="subcellular location">
    <subcellularLocation>
        <location evidence="1">Mitochondrion inner membrane</location>
        <topology evidence="1">Single-pass membrane protein</topology>
    </subcellularLocation>
</comment>
<comment type="similarity">
    <text evidence="3">Belongs to the COX16 family.</text>
</comment>
<keyword id="KW-0472">Membrane</keyword>
<keyword id="KW-0496">Mitochondrion</keyword>
<keyword id="KW-0999">Mitochondrion inner membrane</keyword>
<keyword id="KW-1185">Reference proteome</keyword>
<keyword id="KW-0809">Transit peptide</keyword>
<keyword id="KW-0812">Transmembrane</keyword>
<keyword id="KW-1133">Transmembrane helix</keyword>
<name>COX16_YARLI</name>
<dbReference type="EMBL" id="CR382129">
    <property type="protein sequence ID" value="CAG81963.1"/>
    <property type="molecule type" value="Genomic_DNA"/>
</dbReference>
<dbReference type="RefSeq" id="XP_501656.1">
    <property type="nucleotide sequence ID" value="XM_501656.1"/>
</dbReference>
<dbReference type="FunCoup" id="Q6CCF6">
    <property type="interactions" value="138"/>
</dbReference>
<dbReference type="STRING" id="284591.Q6CCF6"/>
<dbReference type="EnsemblFungi" id="CAG81963">
    <property type="protein sequence ID" value="CAG81963"/>
    <property type="gene ID" value="YALI0_C09801g"/>
</dbReference>
<dbReference type="KEGG" id="yli:2909796"/>
<dbReference type="VEuPathDB" id="FungiDB:YALI0_C09801g"/>
<dbReference type="HOGENOM" id="CLU_131611_2_0_1"/>
<dbReference type="InParanoid" id="Q6CCF6"/>
<dbReference type="OMA" id="VNMKDEY"/>
<dbReference type="OrthoDB" id="122733at4891"/>
<dbReference type="Proteomes" id="UP000001300">
    <property type="component" value="Chromosome C"/>
</dbReference>
<dbReference type="GO" id="GO:0005743">
    <property type="term" value="C:mitochondrial inner membrane"/>
    <property type="evidence" value="ECO:0000318"/>
    <property type="project" value="GO_Central"/>
</dbReference>
<dbReference type="GO" id="GO:0033617">
    <property type="term" value="P:mitochondrial cytochrome c oxidase assembly"/>
    <property type="evidence" value="ECO:0000318"/>
    <property type="project" value="GO_Central"/>
</dbReference>
<dbReference type="InterPro" id="IPR020164">
    <property type="entry name" value="Cyt_c_Oxase_assmbl_COX16"/>
</dbReference>
<dbReference type="PANTHER" id="PTHR17130:SF14">
    <property type="entry name" value="CYTOCHROME C OXIDASE ASSEMBLY PROTEIN COX16 HOMOLOG, MITOCHONDRIAL"/>
    <property type="match status" value="1"/>
</dbReference>
<dbReference type="PANTHER" id="PTHR17130">
    <property type="entry name" value="MITOCHONDRIAL OUTER MEMBRANE PROTEIN 25"/>
    <property type="match status" value="1"/>
</dbReference>
<dbReference type="Pfam" id="PF14138">
    <property type="entry name" value="COX16"/>
    <property type="match status" value="1"/>
</dbReference>